<sequence>METVETLNEGLKRNYTLTITADEIRKRIDQEVAEAAPRVNLPGFRPGKVPAKLVNKMYGASLAQDALNKALQDGVQKLLSDKGEKPAMQPEIELTEGYELGKDAELKVKFEILPEVPEISFDDLKLERLTVEADNAVIDEKIKEFAEHQKSFDDSKKDHKAENGDLVVVDFVGKVDGEPFEGGTGSDMSVELGAGQFIPGFEEQLVGAKQGESRVLKVTFPEDYSVPYLKGKDAEFDVTVSDVRVPRKAEVNDDFAKSLGLESLDQLRDLMKGQIEQELNGLTRTYMKRKLLDQLADSYSFEVPSQMVEAEFNQIWRQLEHAASHEEDSEAALAEMEKERDEYRAIAERRVRLGLALSDIGAKNNVEVSQNEMNMLISQAAQRYNPADRQRFVEYLRQDPMMAAQLRAPLYEDKVVDILFEKANITDRAVTREELEAAIEAEEDSIGKHDHDHDHKEKASDKPKAKKAAAPKKKAAPKKKAAPKAEKKSSDE</sequence>
<accession>Q5NNZ0</accession>
<dbReference type="EC" id="5.2.1.8" evidence="1"/>
<dbReference type="EMBL" id="AE008692">
    <property type="protein sequence ID" value="AAV89570.1"/>
    <property type="molecule type" value="Genomic_DNA"/>
</dbReference>
<dbReference type="RefSeq" id="WP_011240803.1">
    <property type="nucleotide sequence ID" value="NZ_CP035711.1"/>
</dbReference>
<dbReference type="SMR" id="Q5NNZ0"/>
<dbReference type="STRING" id="264203.ZMO0946"/>
<dbReference type="KEGG" id="zmo:ZMO0946"/>
<dbReference type="eggNOG" id="COG0544">
    <property type="taxonomic scope" value="Bacteria"/>
</dbReference>
<dbReference type="HOGENOM" id="CLU_033058_2_2_5"/>
<dbReference type="Proteomes" id="UP000001173">
    <property type="component" value="Chromosome"/>
</dbReference>
<dbReference type="GO" id="GO:0005737">
    <property type="term" value="C:cytoplasm"/>
    <property type="evidence" value="ECO:0007669"/>
    <property type="project" value="UniProtKB-SubCell"/>
</dbReference>
<dbReference type="GO" id="GO:0003755">
    <property type="term" value="F:peptidyl-prolyl cis-trans isomerase activity"/>
    <property type="evidence" value="ECO:0007669"/>
    <property type="project" value="UniProtKB-UniRule"/>
</dbReference>
<dbReference type="GO" id="GO:0044183">
    <property type="term" value="F:protein folding chaperone"/>
    <property type="evidence" value="ECO:0007669"/>
    <property type="project" value="TreeGrafter"/>
</dbReference>
<dbReference type="GO" id="GO:0043022">
    <property type="term" value="F:ribosome binding"/>
    <property type="evidence" value="ECO:0007669"/>
    <property type="project" value="TreeGrafter"/>
</dbReference>
<dbReference type="GO" id="GO:0051083">
    <property type="term" value="P:'de novo' cotranslational protein folding"/>
    <property type="evidence" value="ECO:0007669"/>
    <property type="project" value="TreeGrafter"/>
</dbReference>
<dbReference type="GO" id="GO:0051301">
    <property type="term" value="P:cell division"/>
    <property type="evidence" value="ECO:0007669"/>
    <property type="project" value="UniProtKB-KW"/>
</dbReference>
<dbReference type="GO" id="GO:0061077">
    <property type="term" value="P:chaperone-mediated protein folding"/>
    <property type="evidence" value="ECO:0007669"/>
    <property type="project" value="TreeGrafter"/>
</dbReference>
<dbReference type="GO" id="GO:0015031">
    <property type="term" value="P:protein transport"/>
    <property type="evidence" value="ECO:0007669"/>
    <property type="project" value="UniProtKB-UniRule"/>
</dbReference>
<dbReference type="GO" id="GO:0043335">
    <property type="term" value="P:protein unfolding"/>
    <property type="evidence" value="ECO:0007669"/>
    <property type="project" value="TreeGrafter"/>
</dbReference>
<dbReference type="FunFam" id="3.10.50.40:FF:000001">
    <property type="entry name" value="Trigger factor"/>
    <property type="match status" value="1"/>
</dbReference>
<dbReference type="Gene3D" id="3.10.50.40">
    <property type="match status" value="1"/>
</dbReference>
<dbReference type="Gene3D" id="3.30.70.1050">
    <property type="entry name" value="Trigger factor ribosome-binding domain"/>
    <property type="match status" value="1"/>
</dbReference>
<dbReference type="Gene3D" id="1.10.3120.10">
    <property type="entry name" value="Trigger factor, C-terminal domain"/>
    <property type="match status" value="1"/>
</dbReference>
<dbReference type="HAMAP" id="MF_00303">
    <property type="entry name" value="Trigger_factor_Tig"/>
    <property type="match status" value="1"/>
</dbReference>
<dbReference type="InterPro" id="IPR046357">
    <property type="entry name" value="PPIase_dom_sf"/>
</dbReference>
<dbReference type="InterPro" id="IPR001179">
    <property type="entry name" value="PPIase_FKBP_dom"/>
</dbReference>
<dbReference type="InterPro" id="IPR005215">
    <property type="entry name" value="Trig_fac"/>
</dbReference>
<dbReference type="InterPro" id="IPR008880">
    <property type="entry name" value="Trigger_fac_C"/>
</dbReference>
<dbReference type="InterPro" id="IPR037041">
    <property type="entry name" value="Trigger_fac_C_sf"/>
</dbReference>
<dbReference type="InterPro" id="IPR008881">
    <property type="entry name" value="Trigger_fac_ribosome-bd_bac"/>
</dbReference>
<dbReference type="InterPro" id="IPR036611">
    <property type="entry name" value="Trigger_fac_ribosome-bd_sf"/>
</dbReference>
<dbReference type="InterPro" id="IPR027304">
    <property type="entry name" value="Trigger_fact/SurA_dom_sf"/>
</dbReference>
<dbReference type="NCBIfam" id="TIGR00115">
    <property type="entry name" value="tig"/>
    <property type="match status" value="1"/>
</dbReference>
<dbReference type="PANTHER" id="PTHR30560">
    <property type="entry name" value="TRIGGER FACTOR CHAPERONE AND PEPTIDYL-PROLYL CIS/TRANS ISOMERASE"/>
    <property type="match status" value="1"/>
</dbReference>
<dbReference type="PANTHER" id="PTHR30560:SF3">
    <property type="entry name" value="TRIGGER FACTOR-LIKE PROTEIN TIG, CHLOROPLASTIC"/>
    <property type="match status" value="1"/>
</dbReference>
<dbReference type="Pfam" id="PF00254">
    <property type="entry name" value="FKBP_C"/>
    <property type="match status" value="1"/>
</dbReference>
<dbReference type="Pfam" id="PF05698">
    <property type="entry name" value="Trigger_C"/>
    <property type="match status" value="1"/>
</dbReference>
<dbReference type="Pfam" id="PF05697">
    <property type="entry name" value="Trigger_N"/>
    <property type="match status" value="1"/>
</dbReference>
<dbReference type="PIRSF" id="PIRSF003095">
    <property type="entry name" value="Trigger_factor"/>
    <property type="match status" value="1"/>
</dbReference>
<dbReference type="SUPFAM" id="SSF54534">
    <property type="entry name" value="FKBP-like"/>
    <property type="match status" value="1"/>
</dbReference>
<dbReference type="SUPFAM" id="SSF109998">
    <property type="entry name" value="Triger factor/SurA peptide-binding domain-like"/>
    <property type="match status" value="1"/>
</dbReference>
<dbReference type="SUPFAM" id="SSF102735">
    <property type="entry name" value="Trigger factor ribosome-binding domain"/>
    <property type="match status" value="1"/>
</dbReference>
<dbReference type="PROSITE" id="PS50059">
    <property type="entry name" value="FKBP_PPIASE"/>
    <property type="match status" value="1"/>
</dbReference>
<feature type="chain" id="PRO_0000179472" description="Trigger factor">
    <location>
        <begin position="1"/>
        <end position="492"/>
    </location>
</feature>
<feature type="domain" description="PPIase FKBP-type" evidence="1">
    <location>
        <begin position="164"/>
        <end position="249"/>
    </location>
</feature>
<feature type="region of interest" description="Disordered" evidence="2">
    <location>
        <begin position="440"/>
        <end position="492"/>
    </location>
</feature>
<feature type="compositionally biased region" description="Basic and acidic residues" evidence="2">
    <location>
        <begin position="445"/>
        <end position="463"/>
    </location>
</feature>
<feature type="compositionally biased region" description="Basic residues" evidence="2">
    <location>
        <begin position="464"/>
        <end position="482"/>
    </location>
</feature>
<feature type="compositionally biased region" description="Basic and acidic residues" evidence="2">
    <location>
        <begin position="483"/>
        <end position="492"/>
    </location>
</feature>
<keyword id="KW-0131">Cell cycle</keyword>
<keyword id="KW-0132">Cell division</keyword>
<keyword id="KW-0143">Chaperone</keyword>
<keyword id="KW-0963">Cytoplasm</keyword>
<keyword id="KW-0413">Isomerase</keyword>
<keyword id="KW-1185">Reference proteome</keyword>
<keyword id="KW-0697">Rotamase</keyword>
<organism>
    <name type="scientific">Zymomonas mobilis subsp. mobilis (strain ATCC 31821 / ZM4 / CP4)</name>
    <dbReference type="NCBI Taxonomy" id="264203"/>
    <lineage>
        <taxon>Bacteria</taxon>
        <taxon>Pseudomonadati</taxon>
        <taxon>Pseudomonadota</taxon>
        <taxon>Alphaproteobacteria</taxon>
        <taxon>Sphingomonadales</taxon>
        <taxon>Zymomonadaceae</taxon>
        <taxon>Zymomonas</taxon>
    </lineage>
</organism>
<gene>
    <name evidence="1" type="primary">tig</name>
    <name type="ordered locus">ZMO0946</name>
</gene>
<name>TIG_ZYMMO</name>
<evidence type="ECO:0000255" key="1">
    <source>
        <dbReference type="HAMAP-Rule" id="MF_00303"/>
    </source>
</evidence>
<evidence type="ECO:0000256" key="2">
    <source>
        <dbReference type="SAM" id="MobiDB-lite"/>
    </source>
</evidence>
<protein>
    <recommendedName>
        <fullName evidence="1">Trigger factor</fullName>
        <shortName evidence="1">TF</shortName>
        <ecNumber evidence="1">5.2.1.8</ecNumber>
    </recommendedName>
    <alternativeName>
        <fullName evidence="1">PPIase</fullName>
    </alternativeName>
</protein>
<reference key="1">
    <citation type="journal article" date="2005" name="Nat. Biotechnol.">
        <title>The genome sequence of the ethanologenic bacterium Zymomonas mobilis ZM4.</title>
        <authorList>
            <person name="Seo J.-S."/>
            <person name="Chong H."/>
            <person name="Park H.S."/>
            <person name="Yoon K.-O."/>
            <person name="Jung C."/>
            <person name="Kim J.J."/>
            <person name="Hong J.H."/>
            <person name="Kim H."/>
            <person name="Kim J.-H."/>
            <person name="Kil J.-I."/>
            <person name="Park C.J."/>
            <person name="Oh H.-M."/>
            <person name="Lee J.-S."/>
            <person name="Jin S.-J."/>
            <person name="Um H.-W."/>
            <person name="Lee H.-J."/>
            <person name="Oh S.-J."/>
            <person name="Kim J.Y."/>
            <person name="Kang H.L."/>
            <person name="Lee S.Y."/>
            <person name="Lee K.J."/>
            <person name="Kang H.S."/>
        </authorList>
    </citation>
    <scope>NUCLEOTIDE SEQUENCE [LARGE SCALE GENOMIC DNA]</scope>
    <source>
        <strain>ATCC 31821 / ZM4 / CP4</strain>
    </source>
</reference>
<proteinExistence type="inferred from homology"/>
<comment type="function">
    <text evidence="1">Involved in protein export. Acts as a chaperone by maintaining the newly synthesized protein in an open conformation. Functions as a peptidyl-prolyl cis-trans isomerase.</text>
</comment>
<comment type="catalytic activity">
    <reaction evidence="1">
        <text>[protein]-peptidylproline (omega=180) = [protein]-peptidylproline (omega=0)</text>
        <dbReference type="Rhea" id="RHEA:16237"/>
        <dbReference type="Rhea" id="RHEA-COMP:10747"/>
        <dbReference type="Rhea" id="RHEA-COMP:10748"/>
        <dbReference type="ChEBI" id="CHEBI:83833"/>
        <dbReference type="ChEBI" id="CHEBI:83834"/>
        <dbReference type="EC" id="5.2.1.8"/>
    </reaction>
</comment>
<comment type="subcellular location">
    <subcellularLocation>
        <location>Cytoplasm</location>
    </subcellularLocation>
    <text evidence="1">About half TF is bound to the ribosome near the polypeptide exit tunnel while the other half is free in the cytoplasm.</text>
</comment>
<comment type="domain">
    <text evidence="1">Consists of 3 domains; the N-terminus binds the ribosome, the middle domain has PPIase activity, while the C-terminus has intrinsic chaperone activity on its own.</text>
</comment>
<comment type="similarity">
    <text evidence="1">Belongs to the FKBP-type PPIase family. Tig subfamily.</text>
</comment>